<gene>
    <name evidence="1" type="primary">pdxH</name>
    <name type="ordered locus">NGR_c05140</name>
</gene>
<reference key="1">
    <citation type="journal article" date="2009" name="Appl. Environ. Microbiol.">
        <title>Rhizobium sp. strain NGR234 possesses a remarkable number of secretion systems.</title>
        <authorList>
            <person name="Schmeisser C."/>
            <person name="Liesegang H."/>
            <person name="Krysciak D."/>
            <person name="Bakkou N."/>
            <person name="Le Quere A."/>
            <person name="Wollherr A."/>
            <person name="Heinemeyer I."/>
            <person name="Morgenstern B."/>
            <person name="Pommerening-Roeser A."/>
            <person name="Flores M."/>
            <person name="Palacios R."/>
            <person name="Brenner S."/>
            <person name="Gottschalk G."/>
            <person name="Schmitz R.A."/>
            <person name="Broughton W.J."/>
            <person name="Perret X."/>
            <person name="Strittmatter A.W."/>
            <person name="Streit W.R."/>
        </authorList>
    </citation>
    <scope>NUCLEOTIDE SEQUENCE [LARGE SCALE GENOMIC DNA]</scope>
    <source>
        <strain>NBRC 101917 / NGR234</strain>
    </source>
</reference>
<proteinExistence type="inferred from homology"/>
<feature type="chain" id="PRO_1000186330" description="Pyridoxine/pyridoxamine 5'-phosphate oxidase">
    <location>
        <begin position="1"/>
        <end position="206"/>
    </location>
</feature>
<feature type="binding site" evidence="1">
    <location>
        <begin position="53"/>
        <end position="58"/>
    </location>
    <ligand>
        <name>FMN</name>
        <dbReference type="ChEBI" id="CHEBI:58210"/>
    </ligand>
</feature>
<feature type="binding site" evidence="1">
    <location>
        <position position="58"/>
    </location>
    <ligand>
        <name>substrate</name>
    </ligand>
</feature>
<feature type="binding site" evidence="1">
    <location>
        <begin position="68"/>
        <end position="69"/>
    </location>
    <ligand>
        <name>FMN</name>
        <dbReference type="ChEBI" id="CHEBI:58210"/>
    </ligand>
</feature>
<feature type="binding site" evidence="1">
    <location>
        <position position="75"/>
    </location>
    <ligand>
        <name>FMN</name>
        <dbReference type="ChEBI" id="CHEBI:58210"/>
    </ligand>
</feature>
<feature type="binding site" evidence="1">
    <location>
        <position position="97"/>
    </location>
    <ligand>
        <name>FMN</name>
        <dbReference type="ChEBI" id="CHEBI:58210"/>
    </ligand>
</feature>
<feature type="binding site" evidence="1">
    <location>
        <position position="115"/>
    </location>
    <ligand>
        <name>substrate</name>
    </ligand>
</feature>
<feature type="binding site" evidence="1">
    <location>
        <position position="119"/>
    </location>
    <ligand>
        <name>substrate</name>
    </ligand>
</feature>
<feature type="binding site" evidence="1">
    <location>
        <position position="123"/>
    </location>
    <ligand>
        <name>substrate</name>
    </ligand>
</feature>
<feature type="binding site" evidence="1">
    <location>
        <begin position="132"/>
        <end position="133"/>
    </location>
    <ligand>
        <name>FMN</name>
        <dbReference type="ChEBI" id="CHEBI:58210"/>
    </ligand>
</feature>
<feature type="binding site" evidence="1">
    <location>
        <position position="177"/>
    </location>
    <ligand>
        <name>FMN</name>
        <dbReference type="ChEBI" id="CHEBI:58210"/>
    </ligand>
</feature>
<feature type="binding site" evidence="1">
    <location>
        <begin position="183"/>
        <end position="185"/>
    </location>
    <ligand>
        <name>substrate</name>
    </ligand>
</feature>
<feature type="binding site" evidence="1">
    <location>
        <position position="187"/>
    </location>
    <ligand>
        <name>FMN</name>
        <dbReference type="ChEBI" id="CHEBI:58210"/>
    </ligand>
</feature>
<keyword id="KW-0285">Flavoprotein</keyword>
<keyword id="KW-0288">FMN</keyword>
<keyword id="KW-0560">Oxidoreductase</keyword>
<keyword id="KW-0664">Pyridoxine biosynthesis</keyword>
<keyword id="KW-1185">Reference proteome</keyword>
<evidence type="ECO:0000255" key="1">
    <source>
        <dbReference type="HAMAP-Rule" id="MF_01629"/>
    </source>
</evidence>
<organism>
    <name type="scientific">Sinorhizobium fredii (strain NBRC 101917 / NGR234)</name>
    <dbReference type="NCBI Taxonomy" id="394"/>
    <lineage>
        <taxon>Bacteria</taxon>
        <taxon>Pseudomonadati</taxon>
        <taxon>Pseudomonadota</taxon>
        <taxon>Alphaproteobacteria</taxon>
        <taxon>Hyphomicrobiales</taxon>
        <taxon>Rhizobiaceae</taxon>
        <taxon>Sinorhizobium/Ensifer group</taxon>
        <taxon>Sinorhizobium</taxon>
    </lineage>
</organism>
<comment type="function">
    <text evidence="1">Catalyzes the oxidation of either pyridoxine 5'-phosphate (PNP) or pyridoxamine 5'-phosphate (PMP) into pyridoxal 5'-phosphate (PLP).</text>
</comment>
<comment type="catalytic activity">
    <reaction evidence="1">
        <text>pyridoxamine 5'-phosphate + O2 + H2O = pyridoxal 5'-phosphate + H2O2 + NH4(+)</text>
        <dbReference type="Rhea" id="RHEA:15817"/>
        <dbReference type="ChEBI" id="CHEBI:15377"/>
        <dbReference type="ChEBI" id="CHEBI:15379"/>
        <dbReference type="ChEBI" id="CHEBI:16240"/>
        <dbReference type="ChEBI" id="CHEBI:28938"/>
        <dbReference type="ChEBI" id="CHEBI:58451"/>
        <dbReference type="ChEBI" id="CHEBI:597326"/>
        <dbReference type="EC" id="1.4.3.5"/>
    </reaction>
</comment>
<comment type="catalytic activity">
    <reaction evidence="1">
        <text>pyridoxine 5'-phosphate + O2 = pyridoxal 5'-phosphate + H2O2</text>
        <dbReference type="Rhea" id="RHEA:15149"/>
        <dbReference type="ChEBI" id="CHEBI:15379"/>
        <dbReference type="ChEBI" id="CHEBI:16240"/>
        <dbReference type="ChEBI" id="CHEBI:58589"/>
        <dbReference type="ChEBI" id="CHEBI:597326"/>
        <dbReference type="EC" id="1.4.3.5"/>
    </reaction>
</comment>
<comment type="cofactor">
    <cofactor evidence="1">
        <name>FMN</name>
        <dbReference type="ChEBI" id="CHEBI:58210"/>
    </cofactor>
    <text evidence="1">Binds 1 FMN per subunit.</text>
</comment>
<comment type="pathway">
    <text evidence="1">Cofactor metabolism; pyridoxal 5'-phosphate salvage; pyridoxal 5'-phosphate from pyridoxamine 5'-phosphate: step 1/1.</text>
</comment>
<comment type="pathway">
    <text evidence="1">Cofactor metabolism; pyridoxal 5'-phosphate salvage; pyridoxal 5'-phosphate from pyridoxine 5'-phosphate: step 1/1.</text>
</comment>
<comment type="subunit">
    <text evidence="1">Homodimer.</text>
</comment>
<comment type="similarity">
    <text evidence="1">Belongs to the pyridoxamine 5'-phosphate oxidase family.</text>
</comment>
<sequence>MTANELTTGDFTDADEPFSLFGTWLKDAEKNEVNDPNAVALATVDPDGLPNVRMVLLKGFDEHGFVFYTNFESQKGQELLSTRKAAMCFHWKSLRRQVRLRGPVEIVTAEEADEYFRSRPRGSRIGAWASKQSRPLESRFALEKAVAEFTARHAIGEIPRPEYWSGFRIRPTSIEFWHDRPFRLHDRVEFRRPVPEGGWEKVRMYP</sequence>
<name>PDXH_SINFN</name>
<dbReference type="EC" id="1.4.3.5" evidence="1"/>
<dbReference type="EMBL" id="CP001389">
    <property type="protein sequence ID" value="ACP24310.1"/>
    <property type="molecule type" value="Genomic_DNA"/>
</dbReference>
<dbReference type="RefSeq" id="WP_012707095.1">
    <property type="nucleotide sequence ID" value="NC_012587.1"/>
</dbReference>
<dbReference type="RefSeq" id="YP_002825063.1">
    <property type="nucleotide sequence ID" value="NC_012587.1"/>
</dbReference>
<dbReference type="SMR" id="C3MHI2"/>
<dbReference type="STRING" id="394.NGR_c05140"/>
<dbReference type="KEGG" id="rhi:NGR_c05140"/>
<dbReference type="PATRIC" id="fig|394.7.peg.3327"/>
<dbReference type="eggNOG" id="COG0259">
    <property type="taxonomic scope" value="Bacteria"/>
</dbReference>
<dbReference type="HOGENOM" id="CLU_032263_2_2_5"/>
<dbReference type="OrthoDB" id="9780392at2"/>
<dbReference type="UniPathway" id="UPA01068">
    <property type="reaction ID" value="UER00304"/>
</dbReference>
<dbReference type="UniPathway" id="UPA01068">
    <property type="reaction ID" value="UER00305"/>
</dbReference>
<dbReference type="Proteomes" id="UP000001054">
    <property type="component" value="Chromosome"/>
</dbReference>
<dbReference type="GO" id="GO:0010181">
    <property type="term" value="F:FMN binding"/>
    <property type="evidence" value="ECO:0007669"/>
    <property type="project" value="UniProtKB-UniRule"/>
</dbReference>
<dbReference type="GO" id="GO:0004733">
    <property type="term" value="F:pyridoxamine phosphate oxidase activity"/>
    <property type="evidence" value="ECO:0007669"/>
    <property type="project" value="UniProtKB-UniRule"/>
</dbReference>
<dbReference type="GO" id="GO:0008615">
    <property type="term" value="P:pyridoxine biosynthetic process"/>
    <property type="evidence" value="ECO:0007669"/>
    <property type="project" value="UniProtKB-KW"/>
</dbReference>
<dbReference type="Gene3D" id="2.30.110.10">
    <property type="entry name" value="Electron Transport, Fmn-binding Protein, Chain A"/>
    <property type="match status" value="1"/>
</dbReference>
<dbReference type="HAMAP" id="MF_01629">
    <property type="entry name" value="PdxH"/>
    <property type="match status" value="1"/>
</dbReference>
<dbReference type="InterPro" id="IPR000659">
    <property type="entry name" value="Pyridox_Oxase"/>
</dbReference>
<dbReference type="InterPro" id="IPR019740">
    <property type="entry name" value="Pyridox_Oxase_CS"/>
</dbReference>
<dbReference type="InterPro" id="IPR011576">
    <property type="entry name" value="Pyridox_Oxase_N"/>
</dbReference>
<dbReference type="InterPro" id="IPR019576">
    <property type="entry name" value="Pyridoxamine_oxidase_dimer_C"/>
</dbReference>
<dbReference type="InterPro" id="IPR012349">
    <property type="entry name" value="Split_barrel_FMN-bd"/>
</dbReference>
<dbReference type="NCBIfam" id="TIGR00558">
    <property type="entry name" value="pdxH"/>
    <property type="match status" value="1"/>
</dbReference>
<dbReference type="NCBIfam" id="NF004231">
    <property type="entry name" value="PRK05679.1"/>
    <property type="match status" value="1"/>
</dbReference>
<dbReference type="PANTHER" id="PTHR10851:SF0">
    <property type="entry name" value="PYRIDOXINE-5'-PHOSPHATE OXIDASE"/>
    <property type="match status" value="1"/>
</dbReference>
<dbReference type="PANTHER" id="PTHR10851">
    <property type="entry name" value="PYRIDOXINE-5-PHOSPHATE OXIDASE"/>
    <property type="match status" value="1"/>
</dbReference>
<dbReference type="Pfam" id="PF10590">
    <property type="entry name" value="PNP_phzG_C"/>
    <property type="match status" value="1"/>
</dbReference>
<dbReference type="Pfam" id="PF01243">
    <property type="entry name" value="PNPOx_N"/>
    <property type="match status" value="1"/>
</dbReference>
<dbReference type="PIRSF" id="PIRSF000190">
    <property type="entry name" value="Pyd_amn-ph_oxd"/>
    <property type="match status" value="1"/>
</dbReference>
<dbReference type="SUPFAM" id="SSF50475">
    <property type="entry name" value="FMN-binding split barrel"/>
    <property type="match status" value="1"/>
</dbReference>
<dbReference type="PROSITE" id="PS01064">
    <property type="entry name" value="PYRIDOX_OXIDASE"/>
    <property type="match status" value="1"/>
</dbReference>
<accession>C3MHI2</accession>
<protein>
    <recommendedName>
        <fullName evidence="1">Pyridoxine/pyridoxamine 5'-phosphate oxidase</fullName>
        <ecNumber evidence="1">1.4.3.5</ecNumber>
    </recommendedName>
    <alternativeName>
        <fullName evidence="1">PNP/PMP oxidase</fullName>
        <shortName evidence="1">PNPOx</shortName>
    </alternativeName>
    <alternativeName>
        <fullName evidence="1">Pyridoxal 5'-phosphate synthase</fullName>
    </alternativeName>
</protein>